<comment type="function">
    <text evidence="1">Catalyzes two sequential steps in the biosynthesis of coenzyme A. In the first step cysteine is conjugated to 4'-phosphopantothenate to form 4-phosphopantothenoylcysteine. In the second step the latter compound is decarboxylated to form 4'-phosphopantotheine.</text>
</comment>
<comment type="catalytic activity">
    <reaction evidence="1">
        <text>N-[(R)-4-phosphopantothenoyl]-L-cysteine + H(+) = (R)-4'-phosphopantetheine + CO2</text>
        <dbReference type="Rhea" id="RHEA:16793"/>
        <dbReference type="ChEBI" id="CHEBI:15378"/>
        <dbReference type="ChEBI" id="CHEBI:16526"/>
        <dbReference type="ChEBI" id="CHEBI:59458"/>
        <dbReference type="ChEBI" id="CHEBI:61723"/>
        <dbReference type="EC" id="4.1.1.36"/>
    </reaction>
</comment>
<comment type="catalytic activity">
    <reaction evidence="1">
        <text>(R)-4'-phosphopantothenate + L-cysteine + CTP = N-[(R)-4-phosphopantothenoyl]-L-cysteine + CMP + diphosphate + H(+)</text>
        <dbReference type="Rhea" id="RHEA:19397"/>
        <dbReference type="ChEBI" id="CHEBI:10986"/>
        <dbReference type="ChEBI" id="CHEBI:15378"/>
        <dbReference type="ChEBI" id="CHEBI:33019"/>
        <dbReference type="ChEBI" id="CHEBI:35235"/>
        <dbReference type="ChEBI" id="CHEBI:37563"/>
        <dbReference type="ChEBI" id="CHEBI:59458"/>
        <dbReference type="ChEBI" id="CHEBI:60377"/>
        <dbReference type="EC" id="6.3.2.5"/>
    </reaction>
</comment>
<comment type="cofactor">
    <cofactor evidence="1">
        <name>Mg(2+)</name>
        <dbReference type="ChEBI" id="CHEBI:18420"/>
    </cofactor>
</comment>
<comment type="cofactor">
    <cofactor evidence="1">
        <name>FMN</name>
        <dbReference type="ChEBI" id="CHEBI:58210"/>
    </cofactor>
    <text evidence="1">Binds 1 FMN per subunit.</text>
</comment>
<comment type="pathway">
    <text evidence="1">Cofactor biosynthesis; coenzyme A biosynthesis; CoA from (R)-pantothenate: step 2/5.</text>
</comment>
<comment type="pathway">
    <text evidence="1">Cofactor biosynthesis; coenzyme A biosynthesis; CoA from (R)-pantothenate: step 3/5.</text>
</comment>
<comment type="similarity">
    <text evidence="1">In the N-terminal section; belongs to the HFCD (homo-oligomeric flavin containing Cys decarboxylase) superfamily.</text>
</comment>
<comment type="similarity">
    <text evidence="1">In the C-terminal section; belongs to the PPC synthetase family.</text>
</comment>
<feature type="chain" id="PRO_0000232695" description="Coenzyme A biosynthesis bifunctional protein CoaBC">
    <location>
        <begin position="1"/>
        <end position="418"/>
    </location>
</feature>
<feature type="region of interest" description="Phosphopantothenoylcysteine decarboxylase" evidence="1">
    <location>
        <begin position="1"/>
        <end position="195"/>
    </location>
</feature>
<feature type="region of interest" description="Phosphopantothenate--cysteine ligase" evidence="1">
    <location>
        <begin position="196"/>
        <end position="418"/>
    </location>
</feature>
<feature type="binding site" evidence="1">
    <location>
        <position position="285"/>
    </location>
    <ligand>
        <name>CTP</name>
        <dbReference type="ChEBI" id="CHEBI:37563"/>
    </ligand>
</feature>
<feature type="binding site" evidence="1">
    <location>
        <position position="295"/>
    </location>
    <ligand>
        <name>CTP</name>
        <dbReference type="ChEBI" id="CHEBI:37563"/>
    </ligand>
</feature>
<feature type="binding site" evidence="1">
    <location>
        <position position="336"/>
    </location>
    <ligand>
        <name>CTP</name>
        <dbReference type="ChEBI" id="CHEBI:37563"/>
    </ligand>
</feature>
<feature type="binding site" evidence="1">
    <location>
        <position position="354"/>
    </location>
    <ligand>
        <name>CTP</name>
        <dbReference type="ChEBI" id="CHEBI:37563"/>
    </ligand>
</feature>
<feature type="binding site" evidence="1">
    <location>
        <position position="358"/>
    </location>
    <ligand>
        <name>CTP</name>
        <dbReference type="ChEBI" id="CHEBI:37563"/>
    </ligand>
</feature>
<reference key="1">
    <citation type="journal article" date="2003" name="Proc. Natl. Acad. Sci. U.S.A.">
        <title>The complete genome sequence of Mycobacterium bovis.</title>
        <authorList>
            <person name="Garnier T."/>
            <person name="Eiglmeier K."/>
            <person name="Camus J.-C."/>
            <person name="Medina N."/>
            <person name="Mansoor H."/>
            <person name="Pryor M."/>
            <person name="Duthoy S."/>
            <person name="Grondin S."/>
            <person name="Lacroix C."/>
            <person name="Monsempe C."/>
            <person name="Simon S."/>
            <person name="Harris B."/>
            <person name="Atkin R."/>
            <person name="Doggett J."/>
            <person name="Mayes R."/>
            <person name="Keating L."/>
            <person name="Wheeler P.R."/>
            <person name="Parkhill J."/>
            <person name="Barrell B.G."/>
            <person name="Cole S.T."/>
            <person name="Gordon S.V."/>
            <person name="Hewinson R.G."/>
        </authorList>
    </citation>
    <scope>NUCLEOTIDE SEQUENCE [LARGE SCALE GENOMIC DNA]</scope>
    <source>
        <strain>ATCC BAA-935 / AF2122/97</strain>
    </source>
</reference>
<reference key="2">
    <citation type="journal article" date="2017" name="Genome Announc.">
        <title>Updated reference genome sequence and annotation of Mycobacterium bovis AF2122/97.</title>
        <authorList>
            <person name="Malone K.M."/>
            <person name="Farrell D."/>
            <person name="Stuber T.P."/>
            <person name="Schubert O.T."/>
            <person name="Aebersold R."/>
            <person name="Robbe-Austerman S."/>
            <person name="Gordon S.V."/>
        </authorList>
    </citation>
    <scope>NUCLEOTIDE SEQUENCE [LARGE SCALE GENOMIC DNA]</scope>
    <scope>GENOME REANNOTATION</scope>
    <source>
        <strain>ATCC BAA-935 / AF2122/97</strain>
    </source>
</reference>
<keyword id="KW-0210">Decarboxylase</keyword>
<keyword id="KW-0285">Flavoprotein</keyword>
<keyword id="KW-0288">FMN</keyword>
<keyword id="KW-0436">Ligase</keyword>
<keyword id="KW-0456">Lyase</keyword>
<keyword id="KW-0460">Magnesium</keyword>
<keyword id="KW-0479">Metal-binding</keyword>
<keyword id="KW-0511">Multifunctional enzyme</keyword>
<keyword id="KW-1185">Reference proteome</keyword>
<evidence type="ECO:0000255" key="1">
    <source>
        <dbReference type="HAMAP-Rule" id="MF_02225"/>
    </source>
</evidence>
<gene>
    <name evidence="1" type="primary">coaBC</name>
    <name type="synonym">dfp</name>
    <name type="ordered locus">BQ2027_MB1426</name>
</gene>
<sequence length="418" mass="43577">MVDHKRIPKQVIVGVSGGIAAYKACTVVRQLTEASHRVRVIPTESALRFVGAATFEALSGEPVCTDVFADVPAVPHVHLGQQADLVVVAPATADLLARAAAGRADDLLTATLLTARCPVLFAPAMHTEMWLHPATVDNVATLRRRGAVVLEPATGRLTGADSGAGRLPEAEEITTLAQLLLERHDALPYDLAGRKLLVTAGGTREPIDPVRFIGNRSSGKQGYAVARVAAQRGADVTLIAGHTAGLVDPAGVEVVHVSSAQQLADAVSKHAPTADVLVMAAAVADFRPAQVATAKIKKGVEGPPTIELLRNDDVLAGVVRARAHGQLPNMRAIVGFAAETGDANGDVLFHARAKLRRKGCDLLVVNAVGEGRAFEVDSNDGWLLASDGTESALQHGSKTLMASRIVDAIVTFLAGCSS</sequence>
<protein>
    <recommendedName>
        <fullName evidence="1">Coenzyme A biosynthesis bifunctional protein CoaBC</fullName>
    </recommendedName>
    <alternativeName>
        <fullName evidence="1">DNA/pantothenate metabolism flavoprotein</fullName>
    </alternativeName>
    <alternativeName>
        <fullName evidence="1">Phosphopantothenoylcysteine synthetase/decarboxylase</fullName>
        <shortName evidence="1">PPCS-PPCDC</shortName>
    </alternativeName>
    <domain>
        <recommendedName>
            <fullName evidence="1">Phosphopantothenoylcysteine decarboxylase</fullName>
            <shortName evidence="1">PPC decarboxylase</shortName>
            <shortName evidence="1">PPC-DC</shortName>
            <ecNumber evidence="1">4.1.1.36</ecNumber>
        </recommendedName>
        <alternativeName>
            <fullName evidence="1">CoaC</fullName>
        </alternativeName>
    </domain>
    <domain>
        <recommendedName>
            <fullName evidence="1">Phosphopantothenate--cysteine ligase</fullName>
            <ecNumber evidence="1">6.3.2.5</ecNumber>
        </recommendedName>
        <alternativeName>
            <fullName evidence="1">CoaB</fullName>
        </alternativeName>
        <alternativeName>
            <fullName evidence="1">Phosphopantothenoylcysteine synthetase</fullName>
            <shortName evidence="1">PPC synthetase</shortName>
            <shortName evidence="1">PPC-S</shortName>
        </alternativeName>
    </domain>
</protein>
<proteinExistence type="inferred from homology"/>
<dbReference type="EC" id="4.1.1.36" evidence="1"/>
<dbReference type="EC" id="6.3.2.5" evidence="1"/>
<dbReference type="EMBL" id="LT708304">
    <property type="protein sequence ID" value="SIU00029.1"/>
    <property type="molecule type" value="Genomic_DNA"/>
</dbReference>
<dbReference type="RefSeq" id="NP_855078.1">
    <property type="nucleotide sequence ID" value="NC_002945.3"/>
</dbReference>
<dbReference type="RefSeq" id="WP_003898859.1">
    <property type="nucleotide sequence ID" value="NC_002945.4"/>
</dbReference>
<dbReference type="SMR" id="P67734"/>
<dbReference type="KEGG" id="mbo:BQ2027_MB1426"/>
<dbReference type="PATRIC" id="fig|233413.5.peg.1561"/>
<dbReference type="UniPathway" id="UPA00241">
    <property type="reaction ID" value="UER00353"/>
</dbReference>
<dbReference type="UniPathway" id="UPA00241">
    <property type="reaction ID" value="UER00354"/>
</dbReference>
<dbReference type="Proteomes" id="UP000001419">
    <property type="component" value="Chromosome"/>
</dbReference>
<dbReference type="GO" id="GO:0071513">
    <property type="term" value="C:phosphopantothenoylcysteine decarboxylase complex"/>
    <property type="evidence" value="ECO:0007669"/>
    <property type="project" value="TreeGrafter"/>
</dbReference>
<dbReference type="GO" id="GO:0010181">
    <property type="term" value="F:FMN binding"/>
    <property type="evidence" value="ECO:0007669"/>
    <property type="project" value="UniProtKB-UniRule"/>
</dbReference>
<dbReference type="GO" id="GO:0046872">
    <property type="term" value="F:metal ion binding"/>
    <property type="evidence" value="ECO:0007669"/>
    <property type="project" value="UniProtKB-KW"/>
</dbReference>
<dbReference type="GO" id="GO:0004632">
    <property type="term" value="F:phosphopantothenate--cysteine ligase activity"/>
    <property type="evidence" value="ECO:0007669"/>
    <property type="project" value="UniProtKB-UniRule"/>
</dbReference>
<dbReference type="GO" id="GO:0004633">
    <property type="term" value="F:phosphopantothenoylcysteine decarboxylase activity"/>
    <property type="evidence" value="ECO:0007669"/>
    <property type="project" value="UniProtKB-UniRule"/>
</dbReference>
<dbReference type="GO" id="GO:0015937">
    <property type="term" value="P:coenzyme A biosynthetic process"/>
    <property type="evidence" value="ECO:0007669"/>
    <property type="project" value="UniProtKB-UniRule"/>
</dbReference>
<dbReference type="GO" id="GO:0015941">
    <property type="term" value="P:pantothenate catabolic process"/>
    <property type="evidence" value="ECO:0007669"/>
    <property type="project" value="InterPro"/>
</dbReference>
<dbReference type="FunFam" id="3.40.50.10300:FF:000001">
    <property type="entry name" value="Coenzyme A biosynthesis bifunctional protein CoaBC"/>
    <property type="match status" value="1"/>
</dbReference>
<dbReference type="FunFam" id="3.40.50.1950:FF:000009">
    <property type="entry name" value="Coenzyme A biosynthesis bifunctional protein CoaBC"/>
    <property type="match status" value="1"/>
</dbReference>
<dbReference type="Gene3D" id="3.40.50.10300">
    <property type="entry name" value="CoaB-like"/>
    <property type="match status" value="1"/>
</dbReference>
<dbReference type="Gene3D" id="3.40.50.1950">
    <property type="entry name" value="Flavin prenyltransferase-like"/>
    <property type="match status" value="1"/>
</dbReference>
<dbReference type="HAMAP" id="MF_02225">
    <property type="entry name" value="CoaBC"/>
    <property type="match status" value="1"/>
</dbReference>
<dbReference type="InterPro" id="IPR035929">
    <property type="entry name" value="CoaB-like_sf"/>
</dbReference>
<dbReference type="InterPro" id="IPR005252">
    <property type="entry name" value="CoaBC"/>
</dbReference>
<dbReference type="InterPro" id="IPR007085">
    <property type="entry name" value="DNA/pantothenate-metab_flavo_C"/>
</dbReference>
<dbReference type="InterPro" id="IPR036551">
    <property type="entry name" value="Flavin_trans-like"/>
</dbReference>
<dbReference type="InterPro" id="IPR003382">
    <property type="entry name" value="Flavoprotein"/>
</dbReference>
<dbReference type="NCBIfam" id="TIGR00521">
    <property type="entry name" value="coaBC_dfp"/>
    <property type="match status" value="1"/>
</dbReference>
<dbReference type="PANTHER" id="PTHR14359">
    <property type="entry name" value="HOMO-OLIGOMERIC FLAVIN CONTAINING CYS DECARBOXYLASE FAMILY"/>
    <property type="match status" value="1"/>
</dbReference>
<dbReference type="PANTHER" id="PTHR14359:SF6">
    <property type="entry name" value="PHOSPHOPANTOTHENOYLCYSTEINE DECARBOXYLASE"/>
    <property type="match status" value="1"/>
</dbReference>
<dbReference type="Pfam" id="PF04127">
    <property type="entry name" value="DFP"/>
    <property type="match status" value="1"/>
</dbReference>
<dbReference type="Pfam" id="PF02441">
    <property type="entry name" value="Flavoprotein"/>
    <property type="match status" value="1"/>
</dbReference>
<dbReference type="SUPFAM" id="SSF102645">
    <property type="entry name" value="CoaB-like"/>
    <property type="match status" value="1"/>
</dbReference>
<dbReference type="SUPFAM" id="SSF52507">
    <property type="entry name" value="Homo-oligomeric flavin-containing Cys decarboxylases, HFCD"/>
    <property type="match status" value="1"/>
</dbReference>
<name>COABC_MYCBO</name>
<organism>
    <name type="scientific">Mycobacterium bovis (strain ATCC BAA-935 / AF2122/97)</name>
    <dbReference type="NCBI Taxonomy" id="233413"/>
    <lineage>
        <taxon>Bacteria</taxon>
        <taxon>Bacillati</taxon>
        <taxon>Actinomycetota</taxon>
        <taxon>Actinomycetes</taxon>
        <taxon>Mycobacteriales</taxon>
        <taxon>Mycobacteriaceae</taxon>
        <taxon>Mycobacterium</taxon>
        <taxon>Mycobacterium tuberculosis complex</taxon>
    </lineage>
</organism>
<accession>P67734</accession>
<accession>A0A1R3XY70</accession>
<accession>P71661</accession>
<accession>X2BHR8</accession>